<accession>A2CC85</accession>
<sequence length="156" mass="17572">MSRRNAAEKRPVLPDPQFNNRLATMMISRLMKHGKKSTAQRILAQAFGLINERTGGDPIELFETAVKNATPLVEVRARRVGGATYQVPMEVRQERGTAMALRWLVNFSRARNGRSMSQKLAAELMDAANEAGSAVRKREETHKMAEANKAFAHYRY</sequence>
<proteinExistence type="inferred from homology"/>
<keyword id="KW-0687">Ribonucleoprotein</keyword>
<keyword id="KW-0689">Ribosomal protein</keyword>
<keyword id="KW-0694">RNA-binding</keyword>
<keyword id="KW-0699">rRNA-binding</keyword>
<keyword id="KW-0820">tRNA-binding</keyword>
<evidence type="ECO:0000255" key="1">
    <source>
        <dbReference type="HAMAP-Rule" id="MF_00480"/>
    </source>
</evidence>
<evidence type="ECO:0000305" key="2"/>
<organism>
    <name type="scientific">Prochlorococcus marinus (strain MIT 9303)</name>
    <dbReference type="NCBI Taxonomy" id="59922"/>
    <lineage>
        <taxon>Bacteria</taxon>
        <taxon>Bacillati</taxon>
        <taxon>Cyanobacteriota</taxon>
        <taxon>Cyanophyceae</taxon>
        <taxon>Synechococcales</taxon>
        <taxon>Prochlorococcaceae</taxon>
        <taxon>Prochlorococcus</taxon>
    </lineage>
</organism>
<gene>
    <name evidence="1" type="primary">rpsG</name>
    <name evidence="1" type="synonym">rps7</name>
    <name type="ordered locus">P9303_23621</name>
</gene>
<reference key="1">
    <citation type="journal article" date="2007" name="PLoS Genet.">
        <title>Patterns and implications of gene gain and loss in the evolution of Prochlorococcus.</title>
        <authorList>
            <person name="Kettler G.C."/>
            <person name="Martiny A.C."/>
            <person name="Huang K."/>
            <person name="Zucker J."/>
            <person name="Coleman M.L."/>
            <person name="Rodrigue S."/>
            <person name="Chen F."/>
            <person name="Lapidus A."/>
            <person name="Ferriera S."/>
            <person name="Johnson J."/>
            <person name="Steglich C."/>
            <person name="Church G.M."/>
            <person name="Richardson P."/>
            <person name="Chisholm S.W."/>
        </authorList>
    </citation>
    <scope>NUCLEOTIDE SEQUENCE [LARGE SCALE GENOMIC DNA]</scope>
    <source>
        <strain>MIT 9303</strain>
    </source>
</reference>
<name>RS7_PROM3</name>
<protein>
    <recommendedName>
        <fullName evidence="1">Small ribosomal subunit protein uS7</fullName>
    </recommendedName>
    <alternativeName>
        <fullName evidence="2">30S ribosomal protein S7</fullName>
    </alternativeName>
</protein>
<comment type="function">
    <text evidence="1">One of the primary rRNA binding proteins, it binds directly to 16S rRNA where it nucleates assembly of the head domain of the 30S subunit. Is located at the subunit interface close to the decoding center, probably blocks exit of the E-site tRNA.</text>
</comment>
<comment type="subunit">
    <text evidence="1">Part of the 30S ribosomal subunit. Contacts proteins S9 and S11.</text>
</comment>
<comment type="similarity">
    <text evidence="1">Belongs to the universal ribosomal protein uS7 family.</text>
</comment>
<feature type="chain" id="PRO_1000014256" description="Small ribosomal subunit protein uS7">
    <location>
        <begin position="1"/>
        <end position="156"/>
    </location>
</feature>
<dbReference type="EMBL" id="CP000554">
    <property type="protein sequence ID" value="ABM79095.1"/>
    <property type="molecule type" value="Genomic_DNA"/>
</dbReference>
<dbReference type="RefSeq" id="WP_011131147.1">
    <property type="nucleotide sequence ID" value="NC_008820.1"/>
</dbReference>
<dbReference type="SMR" id="A2CC85"/>
<dbReference type="STRING" id="59922.P9303_23621"/>
<dbReference type="KEGG" id="pmf:P9303_23621"/>
<dbReference type="HOGENOM" id="CLU_072226_1_1_3"/>
<dbReference type="BioCyc" id="PMAR59922:G1G80-2076-MONOMER"/>
<dbReference type="Proteomes" id="UP000002274">
    <property type="component" value="Chromosome"/>
</dbReference>
<dbReference type="GO" id="GO:0015935">
    <property type="term" value="C:small ribosomal subunit"/>
    <property type="evidence" value="ECO:0007669"/>
    <property type="project" value="InterPro"/>
</dbReference>
<dbReference type="GO" id="GO:0019843">
    <property type="term" value="F:rRNA binding"/>
    <property type="evidence" value="ECO:0007669"/>
    <property type="project" value="UniProtKB-UniRule"/>
</dbReference>
<dbReference type="GO" id="GO:0003735">
    <property type="term" value="F:structural constituent of ribosome"/>
    <property type="evidence" value="ECO:0007669"/>
    <property type="project" value="InterPro"/>
</dbReference>
<dbReference type="GO" id="GO:0000049">
    <property type="term" value="F:tRNA binding"/>
    <property type="evidence" value="ECO:0007669"/>
    <property type="project" value="UniProtKB-UniRule"/>
</dbReference>
<dbReference type="GO" id="GO:0006412">
    <property type="term" value="P:translation"/>
    <property type="evidence" value="ECO:0007669"/>
    <property type="project" value="UniProtKB-UniRule"/>
</dbReference>
<dbReference type="CDD" id="cd14869">
    <property type="entry name" value="uS7_Bacteria"/>
    <property type="match status" value="1"/>
</dbReference>
<dbReference type="FunFam" id="1.10.455.10:FF:000001">
    <property type="entry name" value="30S ribosomal protein S7"/>
    <property type="match status" value="1"/>
</dbReference>
<dbReference type="Gene3D" id="1.10.455.10">
    <property type="entry name" value="Ribosomal protein S7 domain"/>
    <property type="match status" value="1"/>
</dbReference>
<dbReference type="HAMAP" id="MF_00480_B">
    <property type="entry name" value="Ribosomal_uS7_B"/>
    <property type="match status" value="1"/>
</dbReference>
<dbReference type="InterPro" id="IPR000235">
    <property type="entry name" value="Ribosomal_uS7"/>
</dbReference>
<dbReference type="InterPro" id="IPR005717">
    <property type="entry name" value="Ribosomal_uS7_bac/org-type"/>
</dbReference>
<dbReference type="InterPro" id="IPR020606">
    <property type="entry name" value="Ribosomal_uS7_CS"/>
</dbReference>
<dbReference type="InterPro" id="IPR023798">
    <property type="entry name" value="Ribosomal_uS7_dom"/>
</dbReference>
<dbReference type="InterPro" id="IPR036823">
    <property type="entry name" value="Ribosomal_uS7_dom_sf"/>
</dbReference>
<dbReference type="NCBIfam" id="TIGR01029">
    <property type="entry name" value="rpsG_bact"/>
    <property type="match status" value="1"/>
</dbReference>
<dbReference type="PANTHER" id="PTHR11205">
    <property type="entry name" value="RIBOSOMAL PROTEIN S7"/>
    <property type="match status" value="1"/>
</dbReference>
<dbReference type="Pfam" id="PF00177">
    <property type="entry name" value="Ribosomal_S7"/>
    <property type="match status" value="1"/>
</dbReference>
<dbReference type="PIRSF" id="PIRSF002122">
    <property type="entry name" value="RPS7p_RPS7a_RPS5e_RPS7o"/>
    <property type="match status" value="1"/>
</dbReference>
<dbReference type="SUPFAM" id="SSF47973">
    <property type="entry name" value="Ribosomal protein S7"/>
    <property type="match status" value="1"/>
</dbReference>
<dbReference type="PROSITE" id="PS00052">
    <property type="entry name" value="RIBOSOMAL_S7"/>
    <property type="match status" value="1"/>
</dbReference>